<evidence type="ECO:0000255" key="1">
    <source>
        <dbReference type="HAMAP-Rule" id="MF_01646"/>
    </source>
</evidence>
<sequence>MNYLPIFADLRQRPVLVVGGGEVATRKIDLLQRAGAEVKIVALALAEPLAAQHQAGQVEWLAQSFTPELLSGVFLVIAATDDAELNAAVFEAANQRHLLVNVVDDQPKCTFIFPSIVDRSPLVVAISSGGQAPVLARLLREKLESLLPASLGTMAEIAGSWRDRIKTRLHSMPARRRFWERLFVGRFASLVSAGQLEQAEGELQQQLVNQQDEQQLPAAARGEVALVGAGPGDAGLLTLRGLQVMQQADVVLYDHLVSADVLDLVRRDAERICVGKRASTHSLPQGEINQLLVKLAQEGKRVVRLKGGDPFIFGRGGEELQAVAQAGITFQVVPGVTAAAGVTAYAGIPLTHRDHAQSVIFITGHCRPDGDSLDWSTLARGRQTLAIYMGTMKAAEISQQLIAHGRSAQTPVAVISRGTRHDQQVQIGTLQELEHLARQAPTPALLVIGEVVDLHHQIAWFGQTTPTVPQDSRPAVVNLA</sequence>
<organism>
    <name type="scientific">Pectobacterium atrosepticum (strain SCRI 1043 / ATCC BAA-672)</name>
    <name type="common">Erwinia carotovora subsp. atroseptica</name>
    <dbReference type="NCBI Taxonomy" id="218491"/>
    <lineage>
        <taxon>Bacteria</taxon>
        <taxon>Pseudomonadati</taxon>
        <taxon>Pseudomonadota</taxon>
        <taxon>Gammaproteobacteria</taxon>
        <taxon>Enterobacterales</taxon>
        <taxon>Pectobacteriaceae</taxon>
        <taxon>Pectobacterium</taxon>
    </lineage>
</organism>
<gene>
    <name evidence="1" type="primary">cysG1</name>
    <name type="ordered locus">ECA3544</name>
</gene>
<proteinExistence type="inferred from homology"/>
<keyword id="KW-0169">Cobalamin biosynthesis</keyword>
<keyword id="KW-0456">Lyase</keyword>
<keyword id="KW-0489">Methyltransferase</keyword>
<keyword id="KW-0511">Multifunctional enzyme</keyword>
<keyword id="KW-0520">NAD</keyword>
<keyword id="KW-0560">Oxidoreductase</keyword>
<keyword id="KW-0597">Phosphoprotein</keyword>
<keyword id="KW-0627">Porphyrin biosynthesis</keyword>
<keyword id="KW-1185">Reference proteome</keyword>
<keyword id="KW-0949">S-adenosyl-L-methionine</keyword>
<keyword id="KW-0808">Transferase</keyword>
<name>CYSG1_PECAS</name>
<dbReference type="EC" id="2.1.1.107" evidence="1"/>
<dbReference type="EC" id="1.3.1.76" evidence="1"/>
<dbReference type="EC" id="4.99.1.4" evidence="1"/>
<dbReference type="EMBL" id="BX950851">
    <property type="protein sequence ID" value="CAG76442.1"/>
    <property type="molecule type" value="Genomic_DNA"/>
</dbReference>
<dbReference type="RefSeq" id="WP_011095047.1">
    <property type="nucleotide sequence ID" value="NC_004547.2"/>
</dbReference>
<dbReference type="SMR" id="Q6D1A4"/>
<dbReference type="STRING" id="218491.ECA3544"/>
<dbReference type="KEGG" id="eca:ECA3544"/>
<dbReference type="PATRIC" id="fig|218491.5.peg.3591"/>
<dbReference type="eggNOG" id="COG0007">
    <property type="taxonomic scope" value="Bacteria"/>
</dbReference>
<dbReference type="eggNOG" id="COG1648">
    <property type="taxonomic scope" value="Bacteria"/>
</dbReference>
<dbReference type="HOGENOM" id="CLU_011276_2_0_6"/>
<dbReference type="OrthoDB" id="9815856at2"/>
<dbReference type="UniPathway" id="UPA00148">
    <property type="reaction ID" value="UER00211"/>
</dbReference>
<dbReference type="UniPathway" id="UPA00148">
    <property type="reaction ID" value="UER00222"/>
</dbReference>
<dbReference type="UniPathway" id="UPA00262">
    <property type="reaction ID" value="UER00211"/>
</dbReference>
<dbReference type="UniPathway" id="UPA00262">
    <property type="reaction ID" value="UER00222"/>
</dbReference>
<dbReference type="UniPathway" id="UPA00262">
    <property type="reaction ID" value="UER00376"/>
</dbReference>
<dbReference type="Proteomes" id="UP000007966">
    <property type="component" value="Chromosome"/>
</dbReference>
<dbReference type="GO" id="GO:0051287">
    <property type="term" value="F:NAD binding"/>
    <property type="evidence" value="ECO:0007669"/>
    <property type="project" value="InterPro"/>
</dbReference>
<dbReference type="GO" id="GO:0043115">
    <property type="term" value="F:precorrin-2 dehydrogenase activity"/>
    <property type="evidence" value="ECO:0007669"/>
    <property type="project" value="UniProtKB-UniRule"/>
</dbReference>
<dbReference type="GO" id="GO:0051266">
    <property type="term" value="F:sirohydrochlorin ferrochelatase activity"/>
    <property type="evidence" value="ECO:0007669"/>
    <property type="project" value="UniProtKB-EC"/>
</dbReference>
<dbReference type="GO" id="GO:0004851">
    <property type="term" value="F:uroporphyrin-III C-methyltransferase activity"/>
    <property type="evidence" value="ECO:0007669"/>
    <property type="project" value="UniProtKB-UniRule"/>
</dbReference>
<dbReference type="GO" id="GO:0009236">
    <property type="term" value="P:cobalamin biosynthetic process"/>
    <property type="evidence" value="ECO:0007669"/>
    <property type="project" value="UniProtKB-UniRule"/>
</dbReference>
<dbReference type="GO" id="GO:0032259">
    <property type="term" value="P:methylation"/>
    <property type="evidence" value="ECO:0007669"/>
    <property type="project" value="UniProtKB-KW"/>
</dbReference>
<dbReference type="GO" id="GO:0019354">
    <property type="term" value="P:siroheme biosynthetic process"/>
    <property type="evidence" value="ECO:0007669"/>
    <property type="project" value="UniProtKB-UniRule"/>
</dbReference>
<dbReference type="CDD" id="cd11642">
    <property type="entry name" value="SUMT"/>
    <property type="match status" value="1"/>
</dbReference>
<dbReference type="FunFam" id="3.30.160.110:FF:000001">
    <property type="entry name" value="Siroheme synthase"/>
    <property type="match status" value="1"/>
</dbReference>
<dbReference type="FunFam" id="3.30.950.10:FF:000001">
    <property type="entry name" value="Siroheme synthase"/>
    <property type="match status" value="1"/>
</dbReference>
<dbReference type="FunFam" id="3.40.1010.10:FF:000001">
    <property type="entry name" value="Siroheme synthase"/>
    <property type="match status" value="1"/>
</dbReference>
<dbReference type="Gene3D" id="3.40.1010.10">
    <property type="entry name" value="Cobalt-precorrin-4 Transmethylase, Domain 1"/>
    <property type="match status" value="1"/>
</dbReference>
<dbReference type="Gene3D" id="3.30.950.10">
    <property type="entry name" value="Methyltransferase, Cobalt-precorrin-4 Transmethylase, Domain 2"/>
    <property type="match status" value="1"/>
</dbReference>
<dbReference type="Gene3D" id="3.40.50.720">
    <property type="entry name" value="NAD(P)-binding Rossmann-like Domain"/>
    <property type="match status" value="1"/>
</dbReference>
<dbReference type="Gene3D" id="1.10.8.210">
    <property type="entry name" value="Sirohaem synthase, dimerisation domain"/>
    <property type="match status" value="1"/>
</dbReference>
<dbReference type="Gene3D" id="3.30.160.110">
    <property type="entry name" value="Siroheme synthase, domain 2"/>
    <property type="match status" value="1"/>
</dbReference>
<dbReference type="HAMAP" id="MF_01646">
    <property type="entry name" value="Siroheme_synth"/>
    <property type="match status" value="1"/>
</dbReference>
<dbReference type="InterPro" id="IPR000878">
    <property type="entry name" value="4pyrrol_Mease"/>
</dbReference>
<dbReference type="InterPro" id="IPR035996">
    <property type="entry name" value="4pyrrol_Methylase_sf"/>
</dbReference>
<dbReference type="InterPro" id="IPR014777">
    <property type="entry name" value="4pyrrole_Mease_sub1"/>
</dbReference>
<dbReference type="InterPro" id="IPR014776">
    <property type="entry name" value="4pyrrole_Mease_sub2"/>
</dbReference>
<dbReference type="InterPro" id="IPR006366">
    <property type="entry name" value="CobA/CysG_C"/>
</dbReference>
<dbReference type="InterPro" id="IPR036291">
    <property type="entry name" value="NAD(P)-bd_dom_sf"/>
</dbReference>
<dbReference type="InterPro" id="IPR050161">
    <property type="entry name" value="Siro_Cobalamin_biosynth"/>
</dbReference>
<dbReference type="InterPro" id="IPR037115">
    <property type="entry name" value="Sirohaem_synt_dimer_dom_sf"/>
</dbReference>
<dbReference type="InterPro" id="IPR012409">
    <property type="entry name" value="Sirohaem_synth"/>
</dbReference>
<dbReference type="InterPro" id="IPR028281">
    <property type="entry name" value="Sirohaem_synthase_central"/>
</dbReference>
<dbReference type="InterPro" id="IPR019478">
    <property type="entry name" value="Sirohaem_synthase_dimer_dom"/>
</dbReference>
<dbReference type="InterPro" id="IPR006367">
    <property type="entry name" value="Sirohaem_synthase_N"/>
</dbReference>
<dbReference type="InterPro" id="IPR003043">
    <property type="entry name" value="Uropor_MeTrfase_CS"/>
</dbReference>
<dbReference type="NCBIfam" id="TIGR01469">
    <property type="entry name" value="cobA_cysG_Cterm"/>
    <property type="match status" value="1"/>
</dbReference>
<dbReference type="NCBIfam" id="TIGR01470">
    <property type="entry name" value="cysG_Nterm"/>
    <property type="match status" value="1"/>
</dbReference>
<dbReference type="NCBIfam" id="NF004790">
    <property type="entry name" value="PRK06136.1"/>
    <property type="match status" value="1"/>
</dbReference>
<dbReference type="NCBIfam" id="NF007922">
    <property type="entry name" value="PRK10637.1"/>
    <property type="match status" value="1"/>
</dbReference>
<dbReference type="PANTHER" id="PTHR45790:SF1">
    <property type="entry name" value="SIROHEME SYNTHASE"/>
    <property type="match status" value="1"/>
</dbReference>
<dbReference type="PANTHER" id="PTHR45790">
    <property type="entry name" value="SIROHEME SYNTHASE-RELATED"/>
    <property type="match status" value="1"/>
</dbReference>
<dbReference type="Pfam" id="PF10414">
    <property type="entry name" value="CysG_dimeriser"/>
    <property type="match status" value="1"/>
</dbReference>
<dbReference type="Pfam" id="PF13241">
    <property type="entry name" value="NAD_binding_7"/>
    <property type="match status" value="1"/>
</dbReference>
<dbReference type="Pfam" id="PF14824">
    <property type="entry name" value="Sirohm_synth_M"/>
    <property type="match status" value="1"/>
</dbReference>
<dbReference type="Pfam" id="PF00590">
    <property type="entry name" value="TP_methylase"/>
    <property type="match status" value="1"/>
</dbReference>
<dbReference type="PIRSF" id="PIRSF036426">
    <property type="entry name" value="Sirohaem_synth"/>
    <property type="match status" value="1"/>
</dbReference>
<dbReference type="SUPFAM" id="SSF51735">
    <property type="entry name" value="NAD(P)-binding Rossmann-fold domains"/>
    <property type="match status" value="1"/>
</dbReference>
<dbReference type="SUPFAM" id="SSF75615">
    <property type="entry name" value="Siroheme synthase middle domains-like"/>
    <property type="match status" value="1"/>
</dbReference>
<dbReference type="SUPFAM" id="SSF53790">
    <property type="entry name" value="Tetrapyrrole methylase"/>
    <property type="match status" value="1"/>
</dbReference>
<dbReference type="PROSITE" id="PS00839">
    <property type="entry name" value="SUMT_1"/>
    <property type="match status" value="1"/>
</dbReference>
<dbReference type="PROSITE" id="PS00840">
    <property type="entry name" value="SUMT_2"/>
    <property type="match status" value="1"/>
</dbReference>
<protein>
    <recommendedName>
        <fullName evidence="1">Siroheme synthase 1</fullName>
    </recommendedName>
    <domain>
        <recommendedName>
            <fullName evidence="1">Uroporphyrinogen-III C-methyltransferase 1</fullName>
            <shortName evidence="1">Urogen III methylase 1</shortName>
            <ecNumber evidence="1">2.1.1.107</ecNumber>
        </recommendedName>
        <alternativeName>
            <fullName evidence="1">SUMT 1</fullName>
        </alternativeName>
        <alternativeName>
            <fullName evidence="1">Uroporphyrinogen III methylase 1</fullName>
            <shortName evidence="1">UROM 1</shortName>
        </alternativeName>
    </domain>
    <domain>
        <recommendedName>
            <fullName evidence="1">Precorrin-2 dehydrogenase 1</fullName>
            <ecNumber evidence="1">1.3.1.76</ecNumber>
        </recommendedName>
    </domain>
    <domain>
        <recommendedName>
            <fullName evidence="1">Sirohydrochlorin ferrochelatase 1</fullName>
            <ecNumber evidence="1">4.99.1.4</ecNumber>
        </recommendedName>
    </domain>
</protein>
<accession>Q6D1A4</accession>
<reference key="1">
    <citation type="journal article" date="2004" name="Proc. Natl. Acad. Sci. U.S.A.">
        <title>Genome sequence of the enterobacterial phytopathogen Erwinia carotovora subsp. atroseptica and characterization of virulence factors.</title>
        <authorList>
            <person name="Bell K.S."/>
            <person name="Sebaihia M."/>
            <person name="Pritchard L."/>
            <person name="Holden M.T.G."/>
            <person name="Hyman L.J."/>
            <person name="Holeva M.C."/>
            <person name="Thomson N.R."/>
            <person name="Bentley S.D."/>
            <person name="Churcher L.J.C."/>
            <person name="Mungall K."/>
            <person name="Atkin R."/>
            <person name="Bason N."/>
            <person name="Brooks K."/>
            <person name="Chillingworth T."/>
            <person name="Clark K."/>
            <person name="Doggett J."/>
            <person name="Fraser A."/>
            <person name="Hance Z."/>
            <person name="Hauser H."/>
            <person name="Jagels K."/>
            <person name="Moule S."/>
            <person name="Norbertczak H."/>
            <person name="Ormond D."/>
            <person name="Price C."/>
            <person name="Quail M.A."/>
            <person name="Sanders M."/>
            <person name="Walker D."/>
            <person name="Whitehead S."/>
            <person name="Salmond G.P.C."/>
            <person name="Birch P.R.J."/>
            <person name="Parkhill J."/>
            <person name="Toth I.K."/>
        </authorList>
    </citation>
    <scope>NUCLEOTIDE SEQUENCE [LARGE SCALE GENOMIC DNA]</scope>
    <source>
        <strain>SCRI 1043 / ATCC BAA-672</strain>
    </source>
</reference>
<feature type="chain" id="PRO_0000330505" description="Siroheme synthase 1">
    <location>
        <begin position="1"/>
        <end position="480"/>
    </location>
</feature>
<feature type="region of interest" description="Precorrin-2 dehydrogenase /sirohydrochlorin ferrochelatase" evidence="1">
    <location>
        <begin position="1"/>
        <end position="203"/>
    </location>
</feature>
<feature type="region of interest" description="Uroporphyrinogen-III C-methyltransferase" evidence="1">
    <location>
        <begin position="222"/>
        <end position="480"/>
    </location>
</feature>
<feature type="active site" description="Proton acceptor" evidence="1">
    <location>
        <position position="254"/>
    </location>
</feature>
<feature type="active site" description="Proton donor" evidence="1">
    <location>
        <position position="276"/>
    </location>
</feature>
<feature type="binding site" evidence="1">
    <location>
        <begin position="22"/>
        <end position="23"/>
    </location>
    <ligand>
        <name>NAD(+)</name>
        <dbReference type="ChEBI" id="CHEBI:57540"/>
    </ligand>
</feature>
<feature type="binding site" evidence="1">
    <location>
        <begin position="43"/>
        <end position="44"/>
    </location>
    <ligand>
        <name>NAD(+)</name>
        <dbReference type="ChEBI" id="CHEBI:57540"/>
    </ligand>
</feature>
<feature type="binding site" evidence="1">
    <location>
        <position position="231"/>
    </location>
    <ligand>
        <name>S-adenosyl-L-methionine</name>
        <dbReference type="ChEBI" id="CHEBI:59789"/>
    </ligand>
</feature>
<feature type="binding site" evidence="1">
    <location>
        <begin position="307"/>
        <end position="309"/>
    </location>
    <ligand>
        <name>S-adenosyl-L-methionine</name>
        <dbReference type="ChEBI" id="CHEBI:59789"/>
    </ligand>
</feature>
<feature type="binding site" evidence="1">
    <location>
        <position position="312"/>
    </location>
    <ligand>
        <name>S-adenosyl-L-methionine</name>
        <dbReference type="ChEBI" id="CHEBI:59789"/>
    </ligand>
</feature>
<feature type="binding site" evidence="1">
    <location>
        <begin position="337"/>
        <end position="338"/>
    </location>
    <ligand>
        <name>S-adenosyl-L-methionine</name>
        <dbReference type="ChEBI" id="CHEBI:59789"/>
    </ligand>
</feature>
<feature type="binding site" evidence="1">
    <location>
        <position position="389"/>
    </location>
    <ligand>
        <name>S-adenosyl-L-methionine</name>
        <dbReference type="ChEBI" id="CHEBI:59789"/>
    </ligand>
</feature>
<feature type="binding site" evidence="1">
    <location>
        <position position="418"/>
    </location>
    <ligand>
        <name>S-adenosyl-L-methionine</name>
        <dbReference type="ChEBI" id="CHEBI:59789"/>
    </ligand>
</feature>
<feature type="modified residue" description="Phosphoserine" evidence="1">
    <location>
        <position position="128"/>
    </location>
</feature>
<comment type="function">
    <text evidence="1">Multifunctional enzyme that catalyzes the SAM-dependent methylations of uroporphyrinogen III at position C-2 and C-7 to form precorrin-2 via precorrin-1. Then it catalyzes the NAD-dependent ring dehydrogenation of precorrin-2 to yield sirohydrochlorin. Finally, it catalyzes the ferrochelation of sirohydrochlorin to yield siroheme.</text>
</comment>
<comment type="catalytic activity">
    <reaction evidence="1">
        <text>uroporphyrinogen III + 2 S-adenosyl-L-methionine = precorrin-2 + 2 S-adenosyl-L-homocysteine + H(+)</text>
        <dbReference type="Rhea" id="RHEA:32459"/>
        <dbReference type="ChEBI" id="CHEBI:15378"/>
        <dbReference type="ChEBI" id="CHEBI:57308"/>
        <dbReference type="ChEBI" id="CHEBI:57856"/>
        <dbReference type="ChEBI" id="CHEBI:58827"/>
        <dbReference type="ChEBI" id="CHEBI:59789"/>
        <dbReference type="EC" id="2.1.1.107"/>
    </reaction>
</comment>
<comment type="catalytic activity">
    <reaction evidence="1">
        <text>precorrin-2 + NAD(+) = sirohydrochlorin + NADH + 2 H(+)</text>
        <dbReference type="Rhea" id="RHEA:15613"/>
        <dbReference type="ChEBI" id="CHEBI:15378"/>
        <dbReference type="ChEBI" id="CHEBI:57540"/>
        <dbReference type="ChEBI" id="CHEBI:57945"/>
        <dbReference type="ChEBI" id="CHEBI:58351"/>
        <dbReference type="ChEBI" id="CHEBI:58827"/>
        <dbReference type="EC" id="1.3.1.76"/>
    </reaction>
</comment>
<comment type="catalytic activity">
    <reaction evidence="1">
        <text>siroheme + 2 H(+) = sirohydrochlorin + Fe(2+)</text>
        <dbReference type="Rhea" id="RHEA:24360"/>
        <dbReference type="ChEBI" id="CHEBI:15378"/>
        <dbReference type="ChEBI" id="CHEBI:29033"/>
        <dbReference type="ChEBI" id="CHEBI:58351"/>
        <dbReference type="ChEBI" id="CHEBI:60052"/>
        <dbReference type="EC" id="4.99.1.4"/>
    </reaction>
</comment>
<comment type="pathway">
    <text evidence="1">Cofactor biosynthesis; adenosylcobalamin biosynthesis; precorrin-2 from uroporphyrinogen III: step 1/1.</text>
</comment>
<comment type="pathway">
    <text evidence="1">Cofactor biosynthesis; adenosylcobalamin biosynthesis; sirohydrochlorin from precorrin-2: step 1/1.</text>
</comment>
<comment type="pathway">
    <text evidence="1">Porphyrin-containing compound metabolism; siroheme biosynthesis; precorrin-2 from uroporphyrinogen III: step 1/1.</text>
</comment>
<comment type="pathway">
    <text evidence="1">Porphyrin-containing compound metabolism; siroheme biosynthesis; siroheme from sirohydrochlorin: step 1/1.</text>
</comment>
<comment type="pathway">
    <text evidence="1">Porphyrin-containing compound metabolism; siroheme biosynthesis; sirohydrochlorin from precorrin-2: step 1/1.</text>
</comment>
<comment type="similarity">
    <text evidence="1">In the N-terminal section; belongs to the precorrin-2 dehydrogenase / sirohydrochlorin ferrochelatase family.</text>
</comment>
<comment type="similarity">
    <text evidence="1">In the C-terminal section; belongs to the precorrin methyltransferase family.</text>
</comment>